<dbReference type="EC" id="2.7.4.9" evidence="1"/>
<dbReference type="EMBL" id="CP000857">
    <property type="protein sequence ID" value="ACN46650.1"/>
    <property type="molecule type" value="Genomic_DNA"/>
</dbReference>
<dbReference type="RefSeq" id="WP_000535396.1">
    <property type="nucleotide sequence ID" value="NC_012125.1"/>
</dbReference>
<dbReference type="SMR" id="C0Q792"/>
<dbReference type="KEGG" id="sei:SPC_2546"/>
<dbReference type="HOGENOM" id="CLU_049131_0_1_6"/>
<dbReference type="Proteomes" id="UP000001599">
    <property type="component" value="Chromosome"/>
</dbReference>
<dbReference type="GO" id="GO:0005829">
    <property type="term" value="C:cytosol"/>
    <property type="evidence" value="ECO:0007669"/>
    <property type="project" value="TreeGrafter"/>
</dbReference>
<dbReference type="GO" id="GO:0005524">
    <property type="term" value="F:ATP binding"/>
    <property type="evidence" value="ECO:0007669"/>
    <property type="project" value="UniProtKB-UniRule"/>
</dbReference>
<dbReference type="GO" id="GO:0004798">
    <property type="term" value="F:dTMP kinase activity"/>
    <property type="evidence" value="ECO:0007669"/>
    <property type="project" value="UniProtKB-UniRule"/>
</dbReference>
<dbReference type="GO" id="GO:0006233">
    <property type="term" value="P:dTDP biosynthetic process"/>
    <property type="evidence" value="ECO:0007669"/>
    <property type="project" value="InterPro"/>
</dbReference>
<dbReference type="GO" id="GO:0006235">
    <property type="term" value="P:dTTP biosynthetic process"/>
    <property type="evidence" value="ECO:0007669"/>
    <property type="project" value="UniProtKB-UniRule"/>
</dbReference>
<dbReference type="GO" id="GO:0006227">
    <property type="term" value="P:dUDP biosynthetic process"/>
    <property type="evidence" value="ECO:0007669"/>
    <property type="project" value="TreeGrafter"/>
</dbReference>
<dbReference type="CDD" id="cd01672">
    <property type="entry name" value="TMPK"/>
    <property type="match status" value="1"/>
</dbReference>
<dbReference type="FunFam" id="3.40.50.300:FF:000321">
    <property type="entry name" value="Thymidylate kinase"/>
    <property type="match status" value="1"/>
</dbReference>
<dbReference type="Gene3D" id="3.40.50.300">
    <property type="entry name" value="P-loop containing nucleotide triphosphate hydrolases"/>
    <property type="match status" value="1"/>
</dbReference>
<dbReference type="HAMAP" id="MF_00165">
    <property type="entry name" value="Thymidylate_kinase"/>
    <property type="match status" value="1"/>
</dbReference>
<dbReference type="InterPro" id="IPR027417">
    <property type="entry name" value="P-loop_NTPase"/>
</dbReference>
<dbReference type="InterPro" id="IPR039430">
    <property type="entry name" value="Thymidylate_kin-like_dom"/>
</dbReference>
<dbReference type="InterPro" id="IPR018095">
    <property type="entry name" value="Thymidylate_kin_CS"/>
</dbReference>
<dbReference type="InterPro" id="IPR018094">
    <property type="entry name" value="Thymidylate_kinase"/>
</dbReference>
<dbReference type="NCBIfam" id="TIGR00041">
    <property type="entry name" value="DTMP_kinase"/>
    <property type="match status" value="1"/>
</dbReference>
<dbReference type="PANTHER" id="PTHR10344">
    <property type="entry name" value="THYMIDYLATE KINASE"/>
    <property type="match status" value="1"/>
</dbReference>
<dbReference type="PANTHER" id="PTHR10344:SF4">
    <property type="entry name" value="UMP-CMP KINASE 2, MITOCHONDRIAL"/>
    <property type="match status" value="1"/>
</dbReference>
<dbReference type="Pfam" id="PF02223">
    <property type="entry name" value="Thymidylate_kin"/>
    <property type="match status" value="1"/>
</dbReference>
<dbReference type="SUPFAM" id="SSF52540">
    <property type="entry name" value="P-loop containing nucleoside triphosphate hydrolases"/>
    <property type="match status" value="1"/>
</dbReference>
<dbReference type="PROSITE" id="PS01331">
    <property type="entry name" value="THYMIDYLATE_KINASE"/>
    <property type="match status" value="1"/>
</dbReference>
<protein>
    <recommendedName>
        <fullName evidence="1">Thymidylate kinase</fullName>
        <ecNumber evidence="1">2.7.4.9</ecNumber>
    </recommendedName>
    <alternativeName>
        <fullName evidence="1">dTMP kinase</fullName>
    </alternativeName>
</protein>
<proteinExistence type="inferred from homology"/>
<evidence type="ECO:0000255" key="1">
    <source>
        <dbReference type="HAMAP-Rule" id="MF_00165"/>
    </source>
</evidence>
<accession>C0Q792</accession>
<feature type="chain" id="PRO_1000123587" description="Thymidylate kinase">
    <location>
        <begin position="1"/>
        <end position="213"/>
    </location>
</feature>
<feature type="binding site" evidence="1">
    <location>
        <begin position="10"/>
        <end position="17"/>
    </location>
    <ligand>
        <name>ATP</name>
        <dbReference type="ChEBI" id="CHEBI:30616"/>
    </ligand>
</feature>
<reference key="1">
    <citation type="journal article" date="2009" name="PLoS ONE">
        <title>Salmonella paratyphi C: genetic divergence from Salmonella choleraesuis and pathogenic convergence with Salmonella typhi.</title>
        <authorList>
            <person name="Liu W.-Q."/>
            <person name="Feng Y."/>
            <person name="Wang Y."/>
            <person name="Zou Q.-H."/>
            <person name="Chen F."/>
            <person name="Guo J.-T."/>
            <person name="Peng Y.-H."/>
            <person name="Jin Y."/>
            <person name="Li Y.-G."/>
            <person name="Hu S.-N."/>
            <person name="Johnston R.N."/>
            <person name="Liu G.-R."/>
            <person name="Liu S.-L."/>
        </authorList>
    </citation>
    <scope>NUCLEOTIDE SEQUENCE [LARGE SCALE GENOMIC DNA]</scope>
    <source>
        <strain>RKS4594</strain>
    </source>
</reference>
<gene>
    <name evidence="1" type="primary">tmk</name>
    <name type="ordered locus">SPC_2546</name>
</gene>
<organism>
    <name type="scientific">Salmonella paratyphi C (strain RKS4594)</name>
    <dbReference type="NCBI Taxonomy" id="476213"/>
    <lineage>
        <taxon>Bacteria</taxon>
        <taxon>Pseudomonadati</taxon>
        <taxon>Pseudomonadota</taxon>
        <taxon>Gammaproteobacteria</taxon>
        <taxon>Enterobacterales</taxon>
        <taxon>Enterobacteriaceae</taxon>
        <taxon>Salmonella</taxon>
    </lineage>
</organism>
<sequence>MGSNYIVIEGLEGAGKTTARDVVVETLEQLGIRNMIFTREPGGTQLAEKLRSLVLDIRSVGDEVITDKAEVLMFYAARVQLVETVIKPALAQGIWVIGDRHDLSTQAYQGGGRGIDQTMLATLRDAVLGDFRPDLTLYLDVTPEVGLKRARARGDLDRIEQESFDFFNRTRARYLELAAQDSRIRTIDATQPLDAVMRDIRATVTKWVQEQAA</sequence>
<keyword id="KW-0067">ATP-binding</keyword>
<keyword id="KW-0418">Kinase</keyword>
<keyword id="KW-0545">Nucleotide biosynthesis</keyword>
<keyword id="KW-0547">Nucleotide-binding</keyword>
<keyword id="KW-0808">Transferase</keyword>
<comment type="function">
    <text evidence="1">Phosphorylation of dTMP to form dTDP in both de novo and salvage pathways of dTTP synthesis.</text>
</comment>
<comment type="catalytic activity">
    <reaction evidence="1">
        <text>dTMP + ATP = dTDP + ADP</text>
        <dbReference type="Rhea" id="RHEA:13517"/>
        <dbReference type="ChEBI" id="CHEBI:30616"/>
        <dbReference type="ChEBI" id="CHEBI:58369"/>
        <dbReference type="ChEBI" id="CHEBI:63528"/>
        <dbReference type="ChEBI" id="CHEBI:456216"/>
        <dbReference type="EC" id="2.7.4.9"/>
    </reaction>
</comment>
<comment type="similarity">
    <text evidence="1">Belongs to the thymidylate kinase family.</text>
</comment>
<name>KTHY_SALPC</name>